<reference key="1">
    <citation type="journal article" date="2010" name="Stand. Genomic Sci.">
        <title>Complete genome sequence of Rhizobium leguminosarum bv trifolii strain WSM2304, an effective microsymbiont of the South American clover Trifolium polymorphum.</title>
        <authorList>
            <person name="Reeve W."/>
            <person name="O'Hara G."/>
            <person name="Chain P."/>
            <person name="Ardley J."/>
            <person name="Brau L."/>
            <person name="Nandesena K."/>
            <person name="Tiwari R."/>
            <person name="Malfatti S."/>
            <person name="Kiss H."/>
            <person name="Lapidus A."/>
            <person name="Copeland A."/>
            <person name="Nolan M."/>
            <person name="Land M."/>
            <person name="Ivanova N."/>
            <person name="Mavromatis K."/>
            <person name="Markowitz V."/>
            <person name="Kyrpides N."/>
            <person name="Melino V."/>
            <person name="Denton M."/>
            <person name="Yates R."/>
            <person name="Howieson J."/>
        </authorList>
    </citation>
    <scope>NUCLEOTIDE SEQUENCE [LARGE SCALE GENOMIC DNA]</scope>
    <source>
        <strain>WSM2304</strain>
    </source>
</reference>
<keyword id="KW-0143">Chaperone</keyword>
<keyword id="KW-0963">Cytoplasm</keyword>
<keyword id="KW-0342">GTP-binding</keyword>
<keyword id="KW-0996">Nickel insertion</keyword>
<keyword id="KW-0547">Nucleotide-binding</keyword>
<keyword id="KW-1185">Reference proteome</keyword>
<accession>B5ZMN5</accession>
<name>UREG_RHILW</name>
<comment type="function">
    <text evidence="1">Facilitates the functional incorporation of the urease nickel metallocenter. This process requires GTP hydrolysis, probably effectuated by UreG.</text>
</comment>
<comment type="subunit">
    <text evidence="1">Homodimer. UreD, UreF and UreG form a complex that acts as a GTP-hydrolysis-dependent molecular chaperone, activating the urease apoprotein by helping to assemble the nickel containing metallocenter of UreC. The UreE protein probably delivers the nickel.</text>
</comment>
<comment type="subcellular location">
    <subcellularLocation>
        <location evidence="1">Cytoplasm</location>
    </subcellularLocation>
</comment>
<comment type="similarity">
    <text evidence="1">Belongs to the SIMIBI class G3E GTPase family. UreG subfamily.</text>
</comment>
<protein>
    <recommendedName>
        <fullName evidence="1">Urease accessory protein UreG</fullName>
    </recommendedName>
</protein>
<dbReference type="EMBL" id="CP001191">
    <property type="protein sequence ID" value="ACI56313.1"/>
    <property type="molecule type" value="Genomic_DNA"/>
</dbReference>
<dbReference type="RefSeq" id="WP_012558721.1">
    <property type="nucleotide sequence ID" value="NC_011369.1"/>
</dbReference>
<dbReference type="SMR" id="B5ZMN5"/>
<dbReference type="STRING" id="395492.Rleg2_3046"/>
<dbReference type="KEGG" id="rlt:Rleg2_3046"/>
<dbReference type="eggNOG" id="COG0378">
    <property type="taxonomic scope" value="Bacteria"/>
</dbReference>
<dbReference type="HOGENOM" id="CLU_072144_1_0_5"/>
<dbReference type="Proteomes" id="UP000008330">
    <property type="component" value="Chromosome"/>
</dbReference>
<dbReference type="GO" id="GO:0005737">
    <property type="term" value="C:cytoplasm"/>
    <property type="evidence" value="ECO:0007669"/>
    <property type="project" value="UniProtKB-SubCell"/>
</dbReference>
<dbReference type="GO" id="GO:0005525">
    <property type="term" value="F:GTP binding"/>
    <property type="evidence" value="ECO:0007669"/>
    <property type="project" value="UniProtKB-KW"/>
</dbReference>
<dbReference type="GO" id="GO:0003924">
    <property type="term" value="F:GTPase activity"/>
    <property type="evidence" value="ECO:0007669"/>
    <property type="project" value="InterPro"/>
</dbReference>
<dbReference type="GO" id="GO:0016151">
    <property type="term" value="F:nickel cation binding"/>
    <property type="evidence" value="ECO:0007669"/>
    <property type="project" value="UniProtKB-UniRule"/>
</dbReference>
<dbReference type="GO" id="GO:0043419">
    <property type="term" value="P:urea catabolic process"/>
    <property type="evidence" value="ECO:0007669"/>
    <property type="project" value="InterPro"/>
</dbReference>
<dbReference type="CDD" id="cd05540">
    <property type="entry name" value="UreG"/>
    <property type="match status" value="1"/>
</dbReference>
<dbReference type="FunFam" id="3.40.50.300:FF:000208">
    <property type="entry name" value="Urease accessory protein UreG"/>
    <property type="match status" value="1"/>
</dbReference>
<dbReference type="Gene3D" id="3.40.50.300">
    <property type="entry name" value="P-loop containing nucleotide triphosphate hydrolases"/>
    <property type="match status" value="1"/>
</dbReference>
<dbReference type="HAMAP" id="MF_01389">
    <property type="entry name" value="UreG"/>
    <property type="match status" value="1"/>
</dbReference>
<dbReference type="InterPro" id="IPR003495">
    <property type="entry name" value="CobW/HypB/UreG_nucleotide-bd"/>
</dbReference>
<dbReference type="InterPro" id="IPR027417">
    <property type="entry name" value="P-loop_NTPase"/>
</dbReference>
<dbReference type="InterPro" id="IPR004400">
    <property type="entry name" value="UreG"/>
</dbReference>
<dbReference type="NCBIfam" id="TIGR00101">
    <property type="entry name" value="ureG"/>
    <property type="match status" value="1"/>
</dbReference>
<dbReference type="PANTHER" id="PTHR31715">
    <property type="entry name" value="UREASE ACCESSORY PROTEIN G"/>
    <property type="match status" value="1"/>
</dbReference>
<dbReference type="PANTHER" id="PTHR31715:SF0">
    <property type="entry name" value="UREASE ACCESSORY PROTEIN G"/>
    <property type="match status" value="1"/>
</dbReference>
<dbReference type="Pfam" id="PF02492">
    <property type="entry name" value="cobW"/>
    <property type="match status" value="1"/>
</dbReference>
<dbReference type="PIRSF" id="PIRSF005624">
    <property type="entry name" value="Ni-bind_GTPase"/>
    <property type="match status" value="1"/>
</dbReference>
<dbReference type="SUPFAM" id="SSF52540">
    <property type="entry name" value="P-loop containing nucleoside triphosphate hydrolases"/>
    <property type="match status" value="1"/>
</dbReference>
<feature type="chain" id="PRO_1000145213" description="Urease accessory protein UreG">
    <location>
        <begin position="1"/>
        <end position="203"/>
    </location>
</feature>
<feature type="binding site" evidence="1">
    <location>
        <begin position="14"/>
        <end position="21"/>
    </location>
    <ligand>
        <name>GTP</name>
        <dbReference type="ChEBI" id="CHEBI:37565"/>
    </ligand>
</feature>
<proteinExistence type="inferred from homology"/>
<evidence type="ECO:0000255" key="1">
    <source>
        <dbReference type="HAMAP-Rule" id="MF_01389"/>
    </source>
</evidence>
<gene>
    <name evidence="1" type="primary">ureG</name>
    <name type="ordered locus">Rleg2_3046</name>
</gene>
<organism>
    <name type="scientific">Rhizobium leguminosarum bv. trifolii (strain WSM2304)</name>
    <dbReference type="NCBI Taxonomy" id="395492"/>
    <lineage>
        <taxon>Bacteria</taxon>
        <taxon>Pseudomonadati</taxon>
        <taxon>Pseudomonadota</taxon>
        <taxon>Alphaproteobacteria</taxon>
        <taxon>Hyphomicrobiales</taxon>
        <taxon>Rhizobiaceae</taxon>
        <taxon>Rhizobium/Agrobacterium group</taxon>
        <taxon>Rhizobium</taxon>
    </lineage>
</organism>
<sequence>MKSRNGPLRVGIGGPVGSGKTALTEKLCKAMRDNYSVAVVTNDIYTTEDAEALVRMQALPSDRIVGVETGGCPHTAIREDATINLQAIAGLNQRIPDLDVVFIESGGDNLAATFSPDLADITIYVISVCQGEEIPRKGGPGITRSDLLVINKKDLAPYVGADLEVMDRDATRMRASRPFVFSDMKRGDGVSSIVSFLREQGGL</sequence>